<organism>
    <name type="scientific">Staphylococcus aureus (strain Mu50 / ATCC 700699)</name>
    <dbReference type="NCBI Taxonomy" id="158878"/>
    <lineage>
        <taxon>Bacteria</taxon>
        <taxon>Bacillati</taxon>
        <taxon>Bacillota</taxon>
        <taxon>Bacilli</taxon>
        <taxon>Bacillales</taxon>
        <taxon>Staphylococcaceae</taxon>
        <taxon>Staphylococcus</taxon>
    </lineage>
</organism>
<protein>
    <recommendedName>
        <fullName>Antitoxin MazE</fullName>
    </recommendedName>
</protein>
<accession>Q99SI6</accession>
<reference key="1">
    <citation type="journal article" date="2001" name="Lancet">
        <title>Whole genome sequencing of meticillin-resistant Staphylococcus aureus.</title>
        <authorList>
            <person name="Kuroda M."/>
            <person name="Ohta T."/>
            <person name="Uchiyama I."/>
            <person name="Baba T."/>
            <person name="Yuzawa H."/>
            <person name="Kobayashi I."/>
            <person name="Cui L."/>
            <person name="Oguchi A."/>
            <person name="Aoki K."/>
            <person name="Nagai Y."/>
            <person name="Lian J.-Q."/>
            <person name="Ito T."/>
            <person name="Kanamori M."/>
            <person name="Matsumaru H."/>
            <person name="Maruyama A."/>
            <person name="Murakami H."/>
            <person name="Hosoyama A."/>
            <person name="Mizutani-Ui Y."/>
            <person name="Takahashi N.K."/>
            <person name="Sawano T."/>
            <person name="Inoue R."/>
            <person name="Kaito C."/>
            <person name="Sekimizu K."/>
            <person name="Hirakawa H."/>
            <person name="Kuhara S."/>
            <person name="Goto S."/>
            <person name="Yabuzaki J."/>
            <person name="Kanehisa M."/>
            <person name="Yamashita A."/>
            <person name="Oshima K."/>
            <person name="Furuya K."/>
            <person name="Yoshino C."/>
            <person name="Shiba T."/>
            <person name="Hattori M."/>
            <person name="Ogasawara N."/>
            <person name="Hayashi H."/>
            <person name="Hiramatsu K."/>
        </authorList>
    </citation>
    <scope>NUCLEOTIDE SEQUENCE [LARGE SCALE GENOMIC DNA]</scope>
    <source>
        <strain>Mu50 / ATCC 700699</strain>
    </source>
</reference>
<feature type="chain" id="PRO_0000330715" description="Antitoxin MazE">
    <location>
        <begin position="1"/>
        <end position="56"/>
    </location>
</feature>
<comment type="function">
    <text evidence="1">Antitoxin component of a type II toxin-antitoxin (TA) system. Labile antitoxin that binds to cognate MazF toxin and counteracts its endoribonuclease activity.</text>
</comment>
<comment type="subunit">
    <text evidence="1">Forms a complex with cognate toxin MazF which inhibits the endoribonuclease activity of MazF.</text>
</comment>
<comment type="similarity">
    <text evidence="2">Belongs to the MazE/EndoAI family.</text>
</comment>
<gene>
    <name type="primary">mazE</name>
    <name type="ordered locus">SAV2069</name>
</gene>
<proteinExistence type="inferred from homology"/>
<name>MAZE_STAAM</name>
<evidence type="ECO:0000250" key="1">
    <source>
        <dbReference type="UniProtKB" id="P0C7B4"/>
    </source>
</evidence>
<evidence type="ECO:0000305" key="2"/>
<sequence length="56" mass="6252">MLSFSQNRSHSLEQSLKEGYSQMADLNLSLANEAFPIECEACDCNETYLSSNSTNE</sequence>
<keyword id="KW-1277">Toxin-antitoxin system</keyword>
<dbReference type="EMBL" id="BA000017">
    <property type="protein sequence ID" value="BAB58231.1"/>
    <property type="molecule type" value="Genomic_DNA"/>
</dbReference>
<dbReference type="RefSeq" id="WP_000948331.1">
    <property type="nucleotide sequence ID" value="NC_002758.2"/>
</dbReference>
<dbReference type="SMR" id="Q99SI6"/>
<dbReference type="GeneID" id="98346377"/>
<dbReference type="KEGG" id="sav:SAV2069"/>
<dbReference type="HOGENOM" id="CLU_3012108_0_0_9"/>
<dbReference type="Proteomes" id="UP000002481">
    <property type="component" value="Chromosome"/>
</dbReference>
<dbReference type="GO" id="GO:0006355">
    <property type="term" value="P:regulation of DNA-templated transcription"/>
    <property type="evidence" value="ECO:0007669"/>
    <property type="project" value="InterPro"/>
</dbReference>
<dbReference type="Gene3D" id="1.10.1220.10">
    <property type="entry name" value="Met repressor-like"/>
    <property type="match status" value="1"/>
</dbReference>
<dbReference type="InterPro" id="IPR013321">
    <property type="entry name" value="Arc_rbn_hlx_hlx"/>
</dbReference>
<dbReference type="InterPro" id="IPR048242">
    <property type="entry name" value="MazE"/>
</dbReference>
<dbReference type="NCBIfam" id="NF041459">
    <property type="entry name" value="antitoxMazE_Staph"/>
    <property type="match status" value="1"/>
</dbReference>